<feature type="chain" id="PRO_1000011760" description="GTPase Der">
    <location>
        <begin position="1"/>
        <end position="436"/>
    </location>
</feature>
<feature type="domain" description="EngA-type G 1">
    <location>
        <begin position="4"/>
        <end position="167"/>
    </location>
</feature>
<feature type="domain" description="EngA-type G 2">
    <location>
        <begin position="175"/>
        <end position="351"/>
    </location>
</feature>
<feature type="domain" description="KH-like" evidence="1">
    <location>
        <begin position="352"/>
        <end position="436"/>
    </location>
</feature>
<feature type="binding site" evidence="1">
    <location>
        <begin position="10"/>
        <end position="17"/>
    </location>
    <ligand>
        <name>GTP</name>
        <dbReference type="ChEBI" id="CHEBI:37565"/>
        <label>1</label>
    </ligand>
</feature>
<feature type="binding site" evidence="1">
    <location>
        <begin position="57"/>
        <end position="61"/>
    </location>
    <ligand>
        <name>GTP</name>
        <dbReference type="ChEBI" id="CHEBI:37565"/>
        <label>1</label>
    </ligand>
</feature>
<feature type="binding site" evidence="1">
    <location>
        <begin position="119"/>
        <end position="122"/>
    </location>
    <ligand>
        <name>GTP</name>
        <dbReference type="ChEBI" id="CHEBI:37565"/>
        <label>1</label>
    </ligand>
</feature>
<feature type="binding site" evidence="1">
    <location>
        <begin position="181"/>
        <end position="188"/>
    </location>
    <ligand>
        <name>GTP</name>
        <dbReference type="ChEBI" id="CHEBI:37565"/>
        <label>2</label>
    </ligand>
</feature>
<feature type="binding site" evidence="1">
    <location>
        <begin position="229"/>
        <end position="233"/>
    </location>
    <ligand>
        <name>GTP</name>
        <dbReference type="ChEBI" id="CHEBI:37565"/>
        <label>2</label>
    </ligand>
</feature>
<feature type="binding site" evidence="1">
    <location>
        <begin position="294"/>
        <end position="297"/>
    </location>
    <ligand>
        <name>GTP</name>
        <dbReference type="ChEBI" id="CHEBI:37565"/>
        <label>2</label>
    </ligand>
</feature>
<gene>
    <name evidence="1" type="primary">der</name>
    <name type="synonym">engA</name>
    <name type="ordered locus">SSA_1803</name>
</gene>
<protein>
    <recommendedName>
        <fullName evidence="1">GTPase Der</fullName>
    </recommendedName>
    <alternativeName>
        <fullName evidence="1">GTP-binding protein EngA</fullName>
    </alternativeName>
</protein>
<organism>
    <name type="scientific">Streptococcus sanguinis (strain SK36)</name>
    <dbReference type="NCBI Taxonomy" id="388919"/>
    <lineage>
        <taxon>Bacteria</taxon>
        <taxon>Bacillati</taxon>
        <taxon>Bacillota</taxon>
        <taxon>Bacilli</taxon>
        <taxon>Lactobacillales</taxon>
        <taxon>Streptococcaceae</taxon>
        <taxon>Streptococcus</taxon>
    </lineage>
</organism>
<reference key="1">
    <citation type="journal article" date="2007" name="J. Bacteriol.">
        <title>Genome of the opportunistic pathogen Streptococcus sanguinis.</title>
        <authorList>
            <person name="Xu P."/>
            <person name="Alves J.M."/>
            <person name="Kitten T."/>
            <person name="Brown A."/>
            <person name="Chen Z."/>
            <person name="Ozaki L.S."/>
            <person name="Manque P."/>
            <person name="Ge X."/>
            <person name="Serrano M.G."/>
            <person name="Puiu D."/>
            <person name="Hendricks S."/>
            <person name="Wang Y."/>
            <person name="Chaplin M.D."/>
            <person name="Akan D."/>
            <person name="Paik S."/>
            <person name="Peterson D.L."/>
            <person name="Macrina F.L."/>
            <person name="Buck G.A."/>
        </authorList>
    </citation>
    <scope>NUCLEOTIDE SEQUENCE [LARGE SCALE GENOMIC DNA]</scope>
    <source>
        <strain>SK36</strain>
    </source>
</reference>
<sequence>MALPTIAIVGRPNVGKSTLFNRIAGERISIVEDVEGVTRDRIYATANWLNRKFSIIDTGGIDDVDAPFMEQIKHQAEIAMDEADVIVFVVSGKEGITDADEYVARMLYKTHKPIILAVNKVDNPEMRNEIFDFYALGLGDPFPVSSVHGIGTGDVLDAIVENLPNEEVVENPDMIKFSLIGRPNVGKSSLINAILGEERVIASPVAGTTRDAIDTVFTDSEGQEFTMIDTAGMRKSGKVYENTEKYSVMRAMRAIDRSDVVLMVLNAEEGIREYDKRIAGFAHEAGKGIVIVVNKWDTLEKDNHTMKDWEEDIRDQFQYLSYAPIIFVSALTKQRLHKLPDMIKQISQSQNTRIPSAVLNDVIMDAIAINPTPTDKGKRLKIFYATQVATKPPTFVIFVNEEELMHFSYLRFLENQIRKAFVFEGTPIHLIARKRK</sequence>
<keyword id="KW-0342">GTP-binding</keyword>
<keyword id="KW-0547">Nucleotide-binding</keyword>
<keyword id="KW-1185">Reference proteome</keyword>
<keyword id="KW-0677">Repeat</keyword>
<keyword id="KW-0690">Ribosome biogenesis</keyword>
<evidence type="ECO:0000255" key="1">
    <source>
        <dbReference type="HAMAP-Rule" id="MF_00195"/>
    </source>
</evidence>
<comment type="function">
    <text evidence="1">GTPase that plays an essential role in the late steps of ribosome biogenesis.</text>
</comment>
<comment type="subunit">
    <text evidence="1">Associates with the 50S ribosomal subunit.</text>
</comment>
<comment type="similarity">
    <text evidence="1">Belongs to the TRAFAC class TrmE-Era-EngA-EngB-Septin-like GTPase superfamily. EngA (Der) GTPase family.</text>
</comment>
<accession>A3CPT0</accession>
<dbReference type="EMBL" id="CP000387">
    <property type="protein sequence ID" value="ABN45185.1"/>
    <property type="molecule type" value="Genomic_DNA"/>
</dbReference>
<dbReference type="RefSeq" id="WP_011837375.1">
    <property type="nucleotide sequence ID" value="NC_009009.1"/>
</dbReference>
<dbReference type="RefSeq" id="YP_001035735.1">
    <property type="nucleotide sequence ID" value="NC_009009.1"/>
</dbReference>
<dbReference type="SMR" id="A3CPT0"/>
<dbReference type="STRING" id="388919.SSA_1803"/>
<dbReference type="KEGG" id="ssa:SSA_1803"/>
<dbReference type="PATRIC" id="fig|388919.9.peg.1710"/>
<dbReference type="eggNOG" id="COG1160">
    <property type="taxonomic scope" value="Bacteria"/>
</dbReference>
<dbReference type="HOGENOM" id="CLU_016077_6_2_9"/>
<dbReference type="OrthoDB" id="9805918at2"/>
<dbReference type="Proteomes" id="UP000002148">
    <property type="component" value="Chromosome"/>
</dbReference>
<dbReference type="GO" id="GO:0005525">
    <property type="term" value="F:GTP binding"/>
    <property type="evidence" value="ECO:0007669"/>
    <property type="project" value="UniProtKB-UniRule"/>
</dbReference>
<dbReference type="GO" id="GO:0043022">
    <property type="term" value="F:ribosome binding"/>
    <property type="evidence" value="ECO:0007669"/>
    <property type="project" value="TreeGrafter"/>
</dbReference>
<dbReference type="GO" id="GO:0042254">
    <property type="term" value="P:ribosome biogenesis"/>
    <property type="evidence" value="ECO:0007669"/>
    <property type="project" value="UniProtKB-KW"/>
</dbReference>
<dbReference type="CDD" id="cd01894">
    <property type="entry name" value="EngA1"/>
    <property type="match status" value="1"/>
</dbReference>
<dbReference type="CDD" id="cd01895">
    <property type="entry name" value="EngA2"/>
    <property type="match status" value="1"/>
</dbReference>
<dbReference type="FunFam" id="3.30.300.20:FF:000004">
    <property type="entry name" value="GTPase Der"/>
    <property type="match status" value="1"/>
</dbReference>
<dbReference type="FunFam" id="3.40.50.300:FF:000040">
    <property type="entry name" value="GTPase Der"/>
    <property type="match status" value="1"/>
</dbReference>
<dbReference type="FunFam" id="3.40.50.300:FF:000057">
    <property type="entry name" value="GTPase Der"/>
    <property type="match status" value="1"/>
</dbReference>
<dbReference type="Gene3D" id="3.30.300.20">
    <property type="match status" value="1"/>
</dbReference>
<dbReference type="Gene3D" id="3.40.50.300">
    <property type="entry name" value="P-loop containing nucleotide triphosphate hydrolases"/>
    <property type="match status" value="2"/>
</dbReference>
<dbReference type="HAMAP" id="MF_00195">
    <property type="entry name" value="GTPase_Der"/>
    <property type="match status" value="1"/>
</dbReference>
<dbReference type="InterPro" id="IPR031166">
    <property type="entry name" value="G_ENGA"/>
</dbReference>
<dbReference type="InterPro" id="IPR006073">
    <property type="entry name" value="GTP-bd"/>
</dbReference>
<dbReference type="InterPro" id="IPR016484">
    <property type="entry name" value="GTPase_Der"/>
</dbReference>
<dbReference type="InterPro" id="IPR032859">
    <property type="entry name" value="KH_dom-like"/>
</dbReference>
<dbReference type="InterPro" id="IPR015946">
    <property type="entry name" value="KH_dom-like_a/b"/>
</dbReference>
<dbReference type="InterPro" id="IPR027417">
    <property type="entry name" value="P-loop_NTPase"/>
</dbReference>
<dbReference type="InterPro" id="IPR005225">
    <property type="entry name" value="Small_GTP-bd"/>
</dbReference>
<dbReference type="NCBIfam" id="TIGR03594">
    <property type="entry name" value="GTPase_EngA"/>
    <property type="match status" value="1"/>
</dbReference>
<dbReference type="NCBIfam" id="TIGR00231">
    <property type="entry name" value="small_GTP"/>
    <property type="match status" value="2"/>
</dbReference>
<dbReference type="PANTHER" id="PTHR43834">
    <property type="entry name" value="GTPASE DER"/>
    <property type="match status" value="1"/>
</dbReference>
<dbReference type="PANTHER" id="PTHR43834:SF6">
    <property type="entry name" value="GTPASE DER"/>
    <property type="match status" value="1"/>
</dbReference>
<dbReference type="Pfam" id="PF14714">
    <property type="entry name" value="KH_dom-like"/>
    <property type="match status" value="1"/>
</dbReference>
<dbReference type="Pfam" id="PF01926">
    <property type="entry name" value="MMR_HSR1"/>
    <property type="match status" value="2"/>
</dbReference>
<dbReference type="PIRSF" id="PIRSF006485">
    <property type="entry name" value="GTP-binding_EngA"/>
    <property type="match status" value="1"/>
</dbReference>
<dbReference type="PRINTS" id="PR00326">
    <property type="entry name" value="GTP1OBG"/>
</dbReference>
<dbReference type="SUPFAM" id="SSF52540">
    <property type="entry name" value="P-loop containing nucleoside triphosphate hydrolases"/>
    <property type="match status" value="2"/>
</dbReference>
<dbReference type="PROSITE" id="PS51712">
    <property type="entry name" value="G_ENGA"/>
    <property type="match status" value="2"/>
</dbReference>
<name>DER_STRSV</name>
<proteinExistence type="inferred from homology"/>